<dbReference type="EC" id="7.1.2.2" evidence="1"/>
<dbReference type="EMBL" id="AP009493">
    <property type="protein sequence ID" value="BAG18992.1"/>
    <property type="molecule type" value="Genomic_DNA"/>
</dbReference>
<dbReference type="RefSeq" id="WP_003966249.1">
    <property type="nucleotide sequence ID" value="NC_010572.1"/>
</dbReference>
<dbReference type="SMR" id="B1W0A3"/>
<dbReference type="KEGG" id="sgr:SGR_2163"/>
<dbReference type="eggNOG" id="COG0055">
    <property type="taxonomic scope" value="Bacteria"/>
</dbReference>
<dbReference type="HOGENOM" id="CLU_022398_0_2_11"/>
<dbReference type="Proteomes" id="UP000001685">
    <property type="component" value="Chromosome"/>
</dbReference>
<dbReference type="GO" id="GO:0005886">
    <property type="term" value="C:plasma membrane"/>
    <property type="evidence" value="ECO:0007669"/>
    <property type="project" value="UniProtKB-SubCell"/>
</dbReference>
<dbReference type="GO" id="GO:0045259">
    <property type="term" value="C:proton-transporting ATP synthase complex"/>
    <property type="evidence" value="ECO:0007669"/>
    <property type="project" value="UniProtKB-KW"/>
</dbReference>
<dbReference type="GO" id="GO:0005524">
    <property type="term" value="F:ATP binding"/>
    <property type="evidence" value="ECO:0007669"/>
    <property type="project" value="UniProtKB-UniRule"/>
</dbReference>
<dbReference type="GO" id="GO:0016887">
    <property type="term" value="F:ATP hydrolysis activity"/>
    <property type="evidence" value="ECO:0007669"/>
    <property type="project" value="InterPro"/>
</dbReference>
<dbReference type="GO" id="GO:0046933">
    <property type="term" value="F:proton-transporting ATP synthase activity, rotational mechanism"/>
    <property type="evidence" value="ECO:0007669"/>
    <property type="project" value="UniProtKB-UniRule"/>
</dbReference>
<dbReference type="CDD" id="cd18110">
    <property type="entry name" value="ATP-synt_F1_beta_C"/>
    <property type="match status" value="1"/>
</dbReference>
<dbReference type="CDD" id="cd18115">
    <property type="entry name" value="ATP-synt_F1_beta_N"/>
    <property type="match status" value="1"/>
</dbReference>
<dbReference type="CDD" id="cd01133">
    <property type="entry name" value="F1-ATPase_beta_CD"/>
    <property type="match status" value="1"/>
</dbReference>
<dbReference type="FunFam" id="1.10.1140.10:FF:000001">
    <property type="entry name" value="ATP synthase subunit beta"/>
    <property type="match status" value="1"/>
</dbReference>
<dbReference type="FunFam" id="2.40.10.170:FF:000005">
    <property type="entry name" value="ATP synthase subunit beta"/>
    <property type="match status" value="1"/>
</dbReference>
<dbReference type="FunFam" id="3.40.50.300:FF:000004">
    <property type="entry name" value="ATP synthase subunit beta"/>
    <property type="match status" value="1"/>
</dbReference>
<dbReference type="Gene3D" id="2.40.10.170">
    <property type="match status" value="1"/>
</dbReference>
<dbReference type="Gene3D" id="1.10.1140.10">
    <property type="entry name" value="Bovine Mitochondrial F1-atpase, Atp Synthase Beta Chain, Chain D, domain 3"/>
    <property type="match status" value="1"/>
</dbReference>
<dbReference type="Gene3D" id="3.40.50.300">
    <property type="entry name" value="P-loop containing nucleotide triphosphate hydrolases"/>
    <property type="match status" value="1"/>
</dbReference>
<dbReference type="HAMAP" id="MF_01347">
    <property type="entry name" value="ATP_synth_beta_bact"/>
    <property type="match status" value="1"/>
</dbReference>
<dbReference type="InterPro" id="IPR003593">
    <property type="entry name" value="AAA+_ATPase"/>
</dbReference>
<dbReference type="InterPro" id="IPR055190">
    <property type="entry name" value="ATP-synt_VA_C"/>
</dbReference>
<dbReference type="InterPro" id="IPR005722">
    <property type="entry name" value="ATP_synth_F1_bsu"/>
</dbReference>
<dbReference type="InterPro" id="IPR020003">
    <property type="entry name" value="ATPase_a/bsu_AS"/>
</dbReference>
<dbReference type="InterPro" id="IPR050053">
    <property type="entry name" value="ATPase_alpha/beta_chains"/>
</dbReference>
<dbReference type="InterPro" id="IPR004100">
    <property type="entry name" value="ATPase_F1/V1/A1_a/bsu_N"/>
</dbReference>
<dbReference type="InterPro" id="IPR036121">
    <property type="entry name" value="ATPase_F1/V1/A1_a/bsu_N_sf"/>
</dbReference>
<dbReference type="InterPro" id="IPR000194">
    <property type="entry name" value="ATPase_F1/V1/A1_a/bsu_nucl-bd"/>
</dbReference>
<dbReference type="InterPro" id="IPR024034">
    <property type="entry name" value="ATPase_F1/V1_b/a_C"/>
</dbReference>
<dbReference type="InterPro" id="IPR027417">
    <property type="entry name" value="P-loop_NTPase"/>
</dbReference>
<dbReference type="NCBIfam" id="TIGR01039">
    <property type="entry name" value="atpD"/>
    <property type="match status" value="1"/>
</dbReference>
<dbReference type="PANTHER" id="PTHR15184">
    <property type="entry name" value="ATP SYNTHASE"/>
    <property type="match status" value="1"/>
</dbReference>
<dbReference type="PANTHER" id="PTHR15184:SF71">
    <property type="entry name" value="ATP SYNTHASE SUBUNIT BETA, MITOCHONDRIAL"/>
    <property type="match status" value="1"/>
</dbReference>
<dbReference type="Pfam" id="PF00006">
    <property type="entry name" value="ATP-synt_ab"/>
    <property type="match status" value="1"/>
</dbReference>
<dbReference type="Pfam" id="PF02874">
    <property type="entry name" value="ATP-synt_ab_N"/>
    <property type="match status" value="1"/>
</dbReference>
<dbReference type="Pfam" id="PF22919">
    <property type="entry name" value="ATP-synt_VA_C"/>
    <property type="match status" value="1"/>
</dbReference>
<dbReference type="SMART" id="SM00382">
    <property type="entry name" value="AAA"/>
    <property type="match status" value="1"/>
</dbReference>
<dbReference type="SUPFAM" id="SSF47917">
    <property type="entry name" value="C-terminal domain of alpha and beta subunits of F1 ATP synthase"/>
    <property type="match status" value="1"/>
</dbReference>
<dbReference type="SUPFAM" id="SSF50615">
    <property type="entry name" value="N-terminal domain of alpha and beta subunits of F1 ATP synthase"/>
    <property type="match status" value="1"/>
</dbReference>
<dbReference type="SUPFAM" id="SSF52540">
    <property type="entry name" value="P-loop containing nucleoside triphosphate hydrolases"/>
    <property type="match status" value="1"/>
</dbReference>
<dbReference type="PROSITE" id="PS00152">
    <property type="entry name" value="ATPASE_ALPHA_BETA"/>
    <property type="match status" value="1"/>
</dbReference>
<feature type="chain" id="PRO_1000143549" description="ATP synthase subunit beta">
    <location>
        <begin position="1"/>
        <end position="480"/>
    </location>
</feature>
<feature type="binding site" evidence="1">
    <location>
        <begin position="166"/>
        <end position="173"/>
    </location>
    <ligand>
        <name>ATP</name>
        <dbReference type="ChEBI" id="CHEBI:30616"/>
    </ligand>
</feature>
<protein>
    <recommendedName>
        <fullName evidence="1">ATP synthase subunit beta</fullName>
        <ecNumber evidence="1">7.1.2.2</ecNumber>
    </recommendedName>
    <alternativeName>
        <fullName evidence="1">ATP synthase F1 sector subunit beta</fullName>
    </alternativeName>
    <alternativeName>
        <fullName evidence="1">F-ATPase subunit beta</fullName>
    </alternativeName>
</protein>
<proteinExistence type="inferred from homology"/>
<reference key="1">
    <citation type="journal article" date="2008" name="J. Bacteriol.">
        <title>Genome sequence of the streptomycin-producing microorganism Streptomyces griseus IFO 13350.</title>
        <authorList>
            <person name="Ohnishi Y."/>
            <person name="Ishikawa J."/>
            <person name="Hara H."/>
            <person name="Suzuki H."/>
            <person name="Ikenoya M."/>
            <person name="Ikeda H."/>
            <person name="Yamashita A."/>
            <person name="Hattori M."/>
            <person name="Horinouchi S."/>
        </authorList>
    </citation>
    <scope>NUCLEOTIDE SEQUENCE [LARGE SCALE GENOMIC DNA]</scope>
    <source>
        <strain>JCM 4626 / CBS 651.72 / NBRC 13350 / KCC S-0626 / ISP 5235</strain>
    </source>
</reference>
<comment type="function">
    <text evidence="1">Produces ATP from ADP in the presence of a proton gradient across the membrane. The catalytic sites are hosted primarily by the beta subunits.</text>
</comment>
<comment type="catalytic activity">
    <reaction evidence="1">
        <text>ATP + H2O + 4 H(+)(in) = ADP + phosphate + 5 H(+)(out)</text>
        <dbReference type="Rhea" id="RHEA:57720"/>
        <dbReference type="ChEBI" id="CHEBI:15377"/>
        <dbReference type="ChEBI" id="CHEBI:15378"/>
        <dbReference type="ChEBI" id="CHEBI:30616"/>
        <dbReference type="ChEBI" id="CHEBI:43474"/>
        <dbReference type="ChEBI" id="CHEBI:456216"/>
        <dbReference type="EC" id="7.1.2.2"/>
    </reaction>
</comment>
<comment type="subunit">
    <text evidence="1">F-type ATPases have 2 components, CF(1) - the catalytic core - and CF(0) - the membrane proton channel. CF(1) has five subunits: alpha(3), beta(3), gamma(1), delta(1), epsilon(1). CF(0) has three main subunits: a(1), b(2) and c(9-12). The alpha and beta chains form an alternating ring which encloses part of the gamma chain. CF(1) is attached to CF(0) by a central stalk formed by the gamma and epsilon chains, while a peripheral stalk is formed by the delta and b chains.</text>
</comment>
<comment type="subcellular location">
    <subcellularLocation>
        <location evidence="1">Cell membrane</location>
        <topology evidence="1">Peripheral membrane protein</topology>
    </subcellularLocation>
</comment>
<comment type="similarity">
    <text evidence="1">Belongs to the ATPase alpha/beta chains family.</text>
</comment>
<keyword id="KW-0066">ATP synthesis</keyword>
<keyword id="KW-0067">ATP-binding</keyword>
<keyword id="KW-1003">Cell membrane</keyword>
<keyword id="KW-0139">CF(1)</keyword>
<keyword id="KW-0375">Hydrogen ion transport</keyword>
<keyword id="KW-0406">Ion transport</keyword>
<keyword id="KW-0472">Membrane</keyword>
<keyword id="KW-0547">Nucleotide-binding</keyword>
<keyword id="KW-1278">Translocase</keyword>
<keyword id="KW-0813">Transport</keyword>
<accession>B1W0A3</accession>
<sequence>MTTTVETAAATGRVARVIGPVVDVEFPVDAMPEIYNALHVEVADPAEDGARKTLTLEVAQHLGDGVVRAISMQPTDGLVRQAPVTDTGTGITVPVGDVTKGKVFNTLGQILNEPEAEAQITERWPIHRKAPAFDQLESKTEMFETGLKVVDLLTPYVKGGKIGLFGGAGVGKTVLIQEMIMRVAKLHDGVSVFAGVGERTREGNDLIDEMTESGVLEKTALVFGQMDEPPGTRLRVALSALTMAEYFRDVQKQDVLLFIDNIFRFTQAGSEVSTLLGRMPSAVGYQPTLADEMGVLQERITSTRGHSITSMQAIYVPADDLTDPAPATTFAHLDATTVLSRPISEKGIYPAVDPLDSTSRILDPRYISQDHYAAASRVKGILQKYKDLQDIIAILGIDELGEEDKLVVHRARRVERFLSQNTHAAKQFTGLDGSDVPLDESIAAFNAICDGDYDHFPEQAFFMCGGLDDLKAKAKELGVS</sequence>
<evidence type="ECO:0000255" key="1">
    <source>
        <dbReference type="HAMAP-Rule" id="MF_01347"/>
    </source>
</evidence>
<organism>
    <name type="scientific">Streptomyces griseus subsp. griseus (strain JCM 4626 / CBS 651.72 / NBRC 13350 / KCC S-0626 / ISP 5235)</name>
    <dbReference type="NCBI Taxonomy" id="455632"/>
    <lineage>
        <taxon>Bacteria</taxon>
        <taxon>Bacillati</taxon>
        <taxon>Actinomycetota</taxon>
        <taxon>Actinomycetes</taxon>
        <taxon>Kitasatosporales</taxon>
        <taxon>Streptomycetaceae</taxon>
        <taxon>Streptomyces</taxon>
    </lineage>
</organism>
<gene>
    <name evidence="1" type="primary">atpD</name>
    <name type="ordered locus">SGR_2163</name>
</gene>
<name>ATPB_STRGG</name>